<accession>O29105</accession>
<comment type="subcellular location">
    <subcellularLocation>
        <location evidence="2">Membrane</location>
        <topology evidence="2">Single-pass membrane protein</topology>
    </subcellularLocation>
</comment>
<protein>
    <recommendedName>
        <fullName>Uncharacterized protein AF_1161</fullName>
    </recommendedName>
</protein>
<proteinExistence type="predicted"/>
<gene>
    <name type="ordered locus">AF_1161</name>
</gene>
<reference key="1">
    <citation type="journal article" date="1997" name="Nature">
        <title>The complete genome sequence of the hyperthermophilic, sulphate-reducing archaeon Archaeoglobus fulgidus.</title>
        <authorList>
            <person name="Klenk H.-P."/>
            <person name="Clayton R.A."/>
            <person name="Tomb J.-F."/>
            <person name="White O."/>
            <person name="Nelson K.E."/>
            <person name="Ketchum K.A."/>
            <person name="Dodson R.J."/>
            <person name="Gwinn M.L."/>
            <person name="Hickey E.K."/>
            <person name="Peterson J.D."/>
            <person name="Richardson D.L."/>
            <person name="Kerlavage A.R."/>
            <person name="Graham D.E."/>
            <person name="Kyrpides N.C."/>
            <person name="Fleischmann R.D."/>
            <person name="Quackenbush J."/>
            <person name="Lee N.H."/>
            <person name="Sutton G.G."/>
            <person name="Gill S.R."/>
            <person name="Kirkness E.F."/>
            <person name="Dougherty B.A."/>
            <person name="McKenney K."/>
            <person name="Adams M.D."/>
            <person name="Loftus B.J."/>
            <person name="Peterson S.N."/>
            <person name="Reich C.I."/>
            <person name="McNeil L.K."/>
            <person name="Badger J.H."/>
            <person name="Glodek A."/>
            <person name="Zhou L."/>
            <person name="Overbeek R."/>
            <person name="Gocayne J.D."/>
            <person name="Weidman J.F."/>
            <person name="McDonald L.A."/>
            <person name="Utterback T.R."/>
            <person name="Cotton M.D."/>
            <person name="Spriggs T."/>
            <person name="Artiach P."/>
            <person name="Kaine B.P."/>
            <person name="Sykes S.M."/>
            <person name="Sadow P.W."/>
            <person name="D'Andrea K.P."/>
            <person name="Bowman C."/>
            <person name="Fujii C."/>
            <person name="Garland S.A."/>
            <person name="Mason T.M."/>
            <person name="Olsen G.J."/>
            <person name="Fraser C.M."/>
            <person name="Smith H.O."/>
            <person name="Woese C.R."/>
            <person name="Venter J.C."/>
        </authorList>
    </citation>
    <scope>NUCLEOTIDE SEQUENCE [LARGE SCALE GENOMIC DNA]</scope>
    <source>
        <strain>ATCC 49558 / DSM 4304 / JCM 9628 / NBRC 100126 / VC-16</strain>
    </source>
</reference>
<dbReference type="EMBL" id="AE000782">
    <property type="protein sequence ID" value="AAB90088.1"/>
    <property type="molecule type" value="Genomic_DNA"/>
</dbReference>
<dbReference type="PIR" id="H69394">
    <property type="entry name" value="H69394"/>
</dbReference>
<dbReference type="RefSeq" id="WP_010878658.1">
    <property type="nucleotide sequence ID" value="NC_000917.1"/>
</dbReference>
<dbReference type="SMR" id="O29105"/>
<dbReference type="STRING" id="224325.AF_1161"/>
<dbReference type="PaxDb" id="224325-AF_1161"/>
<dbReference type="DNASU" id="1484385"/>
<dbReference type="EnsemblBacteria" id="AAB90088">
    <property type="protein sequence ID" value="AAB90088"/>
    <property type="gene ID" value="AF_1161"/>
</dbReference>
<dbReference type="GeneID" id="1484385"/>
<dbReference type="KEGG" id="afu:AF_1161"/>
<dbReference type="eggNOG" id="arCOG10393">
    <property type="taxonomic scope" value="Archaea"/>
</dbReference>
<dbReference type="HOGENOM" id="CLU_2930003_0_0_2"/>
<dbReference type="Proteomes" id="UP000002199">
    <property type="component" value="Chromosome"/>
</dbReference>
<dbReference type="GO" id="GO:0016020">
    <property type="term" value="C:membrane"/>
    <property type="evidence" value="ECO:0007669"/>
    <property type="project" value="UniProtKB-SubCell"/>
</dbReference>
<name>Y1161_ARCFU</name>
<sequence>MPGEELVRRFLERRVLTEKNIERFVKYYWLVSTARMVLGVTILILILIGGLKFSQLIPWR</sequence>
<keyword id="KW-0472">Membrane</keyword>
<keyword id="KW-1185">Reference proteome</keyword>
<keyword id="KW-0812">Transmembrane</keyword>
<keyword id="KW-1133">Transmembrane helix</keyword>
<evidence type="ECO:0000255" key="1"/>
<evidence type="ECO:0000305" key="2"/>
<organism>
    <name type="scientific">Archaeoglobus fulgidus (strain ATCC 49558 / DSM 4304 / JCM 9628 / NBRC 100126 / VC-16)</name>
    <dbReference type="NCBI Taxonomy" id="224325"/>
    <lineage>
        <taxon>Archaea</taxon>
        <taxon>Methanobacteriati</taxon>
        <taxon>Methanobacteriota</taxon>
        <taxon>Archaeoglobi</taxon>
        <taxon>Archaeoglobales</taxon>
        <taxon>Archaeoglobaceae</taxon>
        <taxon>Archaeoglobus</taxon>
    </lineage>
</organism>
<feature type="chain" id="PRO_0000127969" description="Uncharacterized protein AF_1161">
    <location>
        <begin position="1"/>
        <end position="60"/>
    </location>
</feature>
<feature type="transmembrane region" description="Helical" evidence="1">
    <location>
        <begin position="27"/>
        <end position="49"/>
    </location>
</feature>